<protein>
    <recommendedName>
        <fullName evidence="1">Argininosuccinate synthase</fullName>
        <ecNumber evidence="1">6.3.4.5</ecNumber>
    </recommendedName>
    <alternativeName>
        <fullName evidence="1">Citrulline--aspartate ligase</fullName>
    </alternativeName>
</protein>
<feature type="chain" id="PRO_0000148604" description="Argininosuccinate synthase">
    <location>
        <begin position="1"/>
        <end position="405"/>
    </location>
</feature>
<feature type="binding site" evidence="1">
    <location>
        <begin position="11"/>
        <end position="19"/>
    </location>
    <ligand>
        <name>ATP</name>
        <dbReference type="ChEBI" id="CHEBI:30616"/>
    </ligand>
</feature>
<feature type="binding site" evidence="1">
    <location>
        <position position="90"/>
    </location>
    <ligand>
        <name>L-citrulline</name>
        <dbReference type="ChEBI" id="CHEBI:57743"/>
    </ligand>
</feature>
<feature type="binding site" evidence="1">
    <location>
        <position position="119"/>
    </location>
    <ligand>
        <name>ATP</name>
        <dbReference type="ChEBI" id="CHEBI:30616"/>
    </ligand>
</feature>
<feature type="binding site" evidence="1">
    <location>
        <position position="121"/>
    </location>
    <ligand>
        <name>L-aspartate</name>
        <dbReference type="ChEBI" id="CHEBI:29991"/>
    </ligand>
</feature>
<feature type="binding site" evidence="1">
    <location>
        <position position="125"/>
    </location>
    <ligand>
        <name>L-aspartate</name>
        <dbReference type="ChEBI" id="CHEBI:29991"/>
    </ligand>
</feature>
<feature type="binding site" evidence="1">
    <location>
        <position position="125"/>
    </location>
    <ligand>
        <name>L-citrulline</name>
        <dbReference type="ChEBI" id="CHEBI:57743"/>
    </ligand>
</feature>
<feature type="binding site" evidence="1">
    <location>
        <position position="126"/>
    </location>
    <ligand>
        <name>L-aspartate</name>
        <dbReference type="ChEBI" id="CHEBI:29991"/>
    </ligand>
</feature>
<feature type="binding site" evidence="1">
    <location>
        <position position="129"/>
    </location>
    <ligand>
        <name>L-citrulline</name>
        <dbReference type="ChEBI" id="CHEBI:57743"/>
    </ligand>
</feature>
<feature type="binding site" evidence="1">
    <location>
        <position position="178"/>
    </location>
    <ligand>
        <name>L-citrulline</name>
        <dbReference type="ChEBI" id="CHEBI:57743"/>
    </ligand>
</feature>
<feature type="binding site" evidence="1">
    <location>
        <position position="187"/>
    </location>
    <ligand>
        <name>L-citrulline</name>
        <dbReference type="ChEBI" id="CHEBI:57743"/>
    </ligand>
</feature>
<feature type="binding site" evidence="1">
    <location>
        <position position="263"/>
    </location>
    <ligand>
        <name>L-citrulline</name>
        <dbReference type="ChEBI" id="CHEBI:57743"/>
    </ligand>
</feature>
<feature type="binding site" evidence="1">
    <location>
        <position position="275"/>
    </location>
    <ligand>
        <name>L-citrulline</name>
        <dbReference type="ChEBI" id="CHEBI:57743"/>
    </ligand>
</feature>
<feature type="strand" evidence="3">
    <location>
        <begin position="7"/>
        <end position="11"/>
    </location>
</feature>
<feature type="helix" evidence="3">
    <location>
        <begin position="16"/>
        <end position="28"/>
    </location>
</feature>
<feature type="strand" evidence="3">
    <location>
        <begin position="33"/>
        <end position="42"/>
    </location>
</feature>
<feature type="helix" evidence="3">
    <location>
        <begin position="47"/>
        <end position="56"/>
    </location>
</feature>
<feature type="strand" evidence="3">
    <location>
        <begin position="60"/>
        <end position="66"/>
    </location>
</feature>
<feature type="helix" evidence="3">
    <location>
        <begin position="68"/>
        <end position="74"/>
    </location>
</feature>
<feature type="helix" evidence="3">
    <location>
        <begin position="76"/>
        <end position="82"/>
    </location>
</feature>
<feature type="turn" evidence="3">
    <location>
        <begin position="87"/>
        <end position="89"/>
    </location>
</feature>
<feature type="helix" evidence="3">
    <location>
        <begin position="93"/>
        <end position="95"/>
    </location>
</feature>
<feature type="helix" evidence="3">
    <location>
        <begin position="96"/>
        <end position="110"/>
    </location>
</feature>
<feature type="strand" evidence="3">
    <location>
        <begin position="114"/>
        <end position="117"/>
    </location>
</feature>
<feature type="strand" evidence="2">
    <location>
        <begin position="122"/>
        <end position="125"/>
    </location>
</feature>
<feature type="helix" evidence="3">
    <location>
        <begin position="126"/>
        <end position="137"/>
    </location>
</feature>
<feature type="strand" evidence="3">
    <location>
        <begin position="141"/>
        <end position="144"/>
    </location>
</feature>
<feature type="helix" evidence="3">
    <location>
        <begin position="146"/>
        <end position="148"/>
    </location>
</feature>
<feature type="helix" evidence="3">
    <location>
        <begin position="155"/>
        <end position="164"/>
    </location>
</feature>
<feature type="strand" evidence="3">
    <location>
        <begin position="176"/>
        <end position="181"/>
    </location>
</feature>
<feature type="strand" evidence="3">
    <location>
        <begin position="186"/>
        <end position="190"/>
    </location>
</feature>
<feature type="helix" evidence="3">
    <location>
        <begin position="191"/>
        <end position="194"/>
    </location>
</feature>
<feature type="strand" evidence="3">
    <location>
        <begin position="206"/>
        <end position="208"/>
    </location>
</feature>
<feature type="helix" evidence="3">
    <location>
        <begin position="211"/>
        <end position="213"/>
    </location>
</feature>
<feature type="strand" evidence="3">
    <location>
        <begin position="219"/>
        <end position="226"/>
    </location>
</feature>
<feature type="strand" evidence="3">
    <location>
        <begin position="229"/>
        <end position="233"/>
    </location>
</feature>
<feature type="helix" evidence="3">
    <location>
        <begin position="240"/>
        <end position="253"/>
    </location>
</feature>
<feature type="strand" evidence="3">
    <location>
        <begin position="259"/>
        <end position="264"/>
    </location>
</feature>
<feature type="strand" evidence="3">
    <location>
        <begin position="268"/>
        <end position="276"/>
    </location>
</feature>
<feature type="helix" evidence="3">
    <location>
        <begin position="278"/>
        <end position="294"/>
    </location>
</feature>
<feature type="helix" evidence="3">
    <location>
        <begin position="297"/>
        <end position="305"/>
    </location>
</feature>
<feature type="helix" evidence="3">
    <location>
        <begin position="307"/>
        <end position="315"/>
    </location>
</feature>
<feature type="helix" evidence="3">
    <location>
        <begin position="322"/>
        <end position="334"/>
    </location>
</feature>
<feature type="turn" evidence="3">
    <location>
        <begin position="335"/>
        <end position="337"/>
    </location>
</feature>
<feature type="strand" evidence="3">
    <location>
        <begin position="340"/>
        <end position="347"/>
    </location>
</feature>
<feature type="strand" evidence="3">
    <location>
        <begin position="350"/>
        <end position="357"/>
    </location>
</feature>
<feature type="helix" evidence="3">
    <location>
        <begin position="379"/>
        <end position="388"/>
    </location>
</feature>
<feature type="helix" evidence="3">
    <location>
        <begin position="390"/>
        <end position="398"/>
    </location>
</feature>
<feature type="turn" evidence="3">
    <location>
        <begin position="399"/>
        <end position="401"/>
    </location>
</feature>
<gene>
    <name evidence="1" type="primary">argG</name>
    <name type="ordered locus">lpg0494</name>
</gene>
<accession>Q5ZY78</accession>
<proteinExistence type="evidence at protein level"/>
<keyword id="KW-0002">3D-structure</keyword>
<keyword id="KW-0028">Amino-acid biosynthesis</keyword>
<keyword id="KW-0055">Arginine biosynthesis</keyword>
<keyword id="KW-0067">ATP-binding</keyword>
<keyword id="KW-0963">Cytoplasm</keyword>
<keyword id="KW-0436">Ligase</keyword>
<keyword id="KW-0547">Nucleotide-binding</keyword>
<keyword id="KW-1185">Reference proteome</keyword>
<comment type="catalytic activity">
    <reaction evidence="1">
        <text>L-citrulline + L-aspartate + ATP = 2-(N(omega)-L-arginino)succinate + AMP + diphosphate + H(+)</text>
        <dbReference type="Rhea" id="RHEA:10932"/>
        <dbReference type="ChEBI" id="CHEBI:15378"/>
        <dbReference type="ChEBI" id="CHEBI:29991"/>
        <dbReference type="ChEBI" id="CHEBI:30616"/>
        <dbReference type="ChEBI" id="CHEBI:33019"/>
        <dbReference type="ChEBI" id="CHEBI:57472"/>
        <dbReference type="ChEBI" id="CHEBI:57743"/>
        <dbReference type="ChEBI" id="CHEBI:456215"/>
        <dbReference type="EC" id="6.3.4.5"/>
    </reaction>
</comment>
<comment type="pathway">
    <text evidence="1">Amino-acid biosynthesis; L-arginine biosynthesis; L-arginine from L-ornithine and carbamoyl phosphate: step 2/3.</text>
</comment>
<comment type="subunit">
    <text evidence="1">Homotetramer.</text>
</comment>
<comment type="subcellular location">
    <subcellularLocation>
        <location evidence="1">Cytoplasm</location>
    </subcellularLocation>
</comment>
<comment type="similarity">
    <text evidence="1">Belongs to the argininosuccinate synthase family. Type 1 subfamily.</text>
</comment>
<evidence type="ECO:0000255" key="1">
    <source>
        <dbReference type="HAMAP-Rule" id="MF_00005"/>
    </source>
</evidence>
<evidence type="ECO:0007829" key="2">
    <source>
        <dbReference type="PDB" id="6XNQ"/>
    </source>
</evidence>
<evidence type="ECO:0007829" key="3">
    <source>
        <dbReference type="PDB" id="7K5Z"/>
    </source>
</evidence>
<organism>
    <name type="scientific">Legionella pneumophila subsp. pneumophila (strain Philadelphia 1 / ATCC 33152 / DSM 7513)</name>
    <dbReference type="NCBI Taxonomy" id="272624"/>
    <lineage>
        <taxon>Bacteria</taxon>
        <taxon>Pseudomonadati</taxon>
        <taxon>Pseudomonadota</taxon>
        <taxon>Gammaproteobacteria</taxon>
        <taxon>Legionellales</taxon>
        <taxon>Legionellaceae</taxon>
        <taxon>Legionella</taxon>
    </lineage>
</organism>
<name>ASSY_LEGPH</name>
<sequence length="405" mass="44985">MKKVIKKIALAYSGGLDTSIMIPWLKEHYEHAEVIAVICDLGQQEDLDAIKNKALKSGASKAYVVDVKNEFATQYLWPLVKSGALYEDQYILGTISRPLIAQKLVEIALTEQVNAVAHGATGKGNDQVRFEYSIKALAPQLEIIAPWRTWDIKSRQEAIVYAKAHGIEVPVTPKAPYSRDHNIWYISHEGGVLEDPSQEMPNDVLLMTAPVSQTPDEEEVVVLDFKKGVPVALNGQELSPVDLLNSLNQKAGQHGIGVADIVENRLVGMKIRGIYEAPAAAVLYKAHKLLESLCLTRSTLHLKQSLQQTYANLVYEGRWFSQTKQALDAFIDVTQQHVTGCVKLKLFKGNIIPAGMHSPYSLHHPELATFEEDNVYNQKDAEGFINLFSLSAKIYSQVHQGGNYD</sequence>
<reference key="1">
    <citation type="journal article" date="2004" name="Science">
        <title>The genomic sequence of the accidental pathogen Legionella pneumophila.</title>
        <authorList>
            <person name="Chien M."/>
            <person name="Morozova I."/>
            <person name="Shi S."/>
            <person name="Sheng H."/>
            <person name="Chen J."/>
            <person name="Gomez S.M."/>
            <person name="Asamani G."/>
            <person name="Hill K."/>
            <person name="Nuara J."/>
            <person name="Feder M."/>
            <person name="Rineer J."/>
            <person name="Greenberg J.J."/>
            <person name="Steshenko V."/>
            <person name="Park S.H."/>
            <person name="Zhao B."/>
            <person name="Teplitskaya E."/>
            <person name="Edwards J.R."/>
            <person name="Pampou S."/>
            <person name="Georghiou A."/>
            <person name="Chou I.-C."/>
            <person name="Iannuccilli W."/>
            <person name="Ulz M.E."/>
            <person name="Kim D.H."/>
            <person name="Geringer-Sameth A."/>
            <person name="Goldsberry C."/>
            <person name="Morozov P."/>
            <person name="Fischer S.G."/>
            <person name="Segal G."/>
            <person name="Qu X."/>
            <person name="Rzhetsky A."/>
            <person name="Zhang P."/>
            <person name="Cayanis E."/>
            <person name="De Jong P.J."/>
            <person name="Ju J."/>
            <person name="Kalachikov S."/>
            <person name="Shuman H.A."/>
            <person name="Russo J.J."/>
        </authorList>
    </citation>
    <scope>NUCLEOTIDE SEQUENCE [LARGE SCALE GENOMIC DNA]</scope>
    <source>
        <strain>Philadelphia 1 / ATCC 33152 / DSM 7513</strain>
    </source>
</reference>
<dbReference type="EC" id="6.3.4.5" evidence="1"/>
<dbReference type="EMBL" id="AE017354">
    <property type="protein sequence ID" value="AAU26591.1"/>
    <property type="molecule type" value="Genomic_DNA"/>
</dbReference>
<dbReference type="RefSeq" id="WP_010946242.1">
    <property type="nucleotide sequence ID" value="NC_002942.5"/>
</dbReference>
<dbReference type="RefSeq" id="YP_094538.1">
    <property type="nucleotide sequence ID" value="NC_002942.5"/>
</dbReference>
<dbReference type="PDB" id="6XNQ">
    <property type="method" value="X-ray"/>
    <property type="resolution" value="1.95 A"/>
    <property type="chains" value="A/B/C/D=1-405"/>
</dbReference>
<dbReference type="PDB" id="7K5Z">
    <property type="method" value="X-ray"/>
    <property type="resolution" value="1.85 A"/>
    <property type="chains" value="A/B/C/D=1-405"/>
</dbReference>
<dbReference type="PDBsum" id="6XNQ"/>
<dbReference type="PDBsum" id="7K5Z"/>
<dbReference type="SMR" id="Q5ZY78"/>
<dbReference type="STRING" id="272624.lpg0494"/>
<dbReference type="PaxDb" id="272624-lpg0494"/>
<dbReference type="KEGG" id="lpn:lpg0494"/>
<dbReference type="PATRIC" id="fig|272624.6.peg.515"/>
<dbReference type="eggNOG" id="COG0137">
    <property type="taxonomic scope" value="Bacteria"/>
</dbReference>
<dbReference type="HOGENOM" id="CLU_032784_4_2_6"/>
<dbReference type="OrthoDB" id="9801641at2"/>
<dbReference type="UniPathway" id="UPA00068">
    <property type="reaction ID" value="UER00113"/>
</dbReference>
<dbReference type="Proteomes" id="UP000000609">
    <property type="component" value="Chromosome"/>
</dbReference>
<dbReference type="GO" id="GO:0005737">
    <property type="term" value="C:cytoplasm"/>
    <property type="evidence" value="ECO:0007669"/>
    <property type="project" value="UniProtKB-SubCell"/>
</dbReference>
<dbReference type="GO" id="GO:0004055">
    <property type="term" value="F:argininosuccinate synthase activity"/>
    <property type="evidence" value="ECO:0007669"/>
    <property type="project" value="UniProtKB-UniRule"/>
</dbReference>
<dbReference type="GO" id="GO:0005524">
    <property type="term" value="F:ATP binding"/>
    <property type="evidence" value="ECO:0007669"/>
    <property type="project" value="UniProtKB-UniRule"/>
</dbReference>
<dbReference type="GO" id="GO:0000053">
    <property type="term" value="P:argininosuccinate metabolic process"/>
    <property type="evidence" value="ECO:0007669"/>
    <property type="project" value="TreeGrafter"/>
</dbReference>
<dbReference type="GO" id="GO:0006526">
    <property type="term" value="P:L-arginine biosynthetic process"/>
    <property type="evidence" value="ECO:0007669"/>
    <property type="project" value="UniProtKB-UniRule"/>
</dbReference>
<dbReference type="GO" id="GO:0000050">
    <property type="term" value="P:urea cycle"/>
    <property type="evidence" value="ECO:0007669"/>
    <property type="project" value="TreeGrafter"/>
</dbReference>
<dbReference type="CDD" id="cd01999">
    <property type="entry name" value="ASS"/>
    <property type="match status" value="1"/>
</dbReference>
<dbReference type="FunFam" id="3.40.50.620:FF:000019">
    <property type="entry name" value="Argininosuccinate synthase"/>
    <property type="match status" value="1"/>
</dbReference>
<dbReference type="FunFam" id="3.90.1260.10:FF:000007">
    <property type="entry name" value="Argininosuccinate synthase"/>
    <property type="match status" value="1"/>
</dbReference>
<dbReference type="Gene3D" id="3.90.1260.10">
    <property type="entry name" value="Argininosuccinate synthetase, chain A, domain 2"/>
    <property type="match status" value="1"/>
</dbReference>
<dbReference type="Gene3D" id="3.40.50.620">
    <property type="entry name" value="HUPs"/>
    <property type="match status" value="1"/>
</dbReference>
<dbReference type="Gene3D" id="1.20.5.470">
    <property type="entry name" value="Single helix bin"/>
    <property type="match status" value="1"/>
</dbReference>
<dbReference type="HAMAP" id="MF_00005">
    <property type="entry name" value="Arg_succ_synth_type1"/>
    <property type="match status" value="1"/>
</dbReference>
<dbReference type="InterPro" id="IPR048268">
    <property type="entry name" value="Arginosuc_syn_C"/>
</dbReference>
<dbReference type="InterPro" id="IPR048267">
    <property type="entry name" value="Arginosuc_syn_N"/>
</dbReference>
<dbReference type="InterPro" id="IPR001518">
    <property type="entry name" value="Arginosuc_synth"/>
</dbReference>
<dbReference type="InterPro" id="IPR018223">
    <property type="entry name" value="Arginosuc_synth_CS"/>
</dbReference>
<dbReference type="InterPro" id="IPR023434">
    <property type="entry name" value="Arginosuc_synth_type_1_subfam"/>
</dbReference>
<dbReference type="InterPro" id="IPR024074">
    <property type="entry name" value="AS_cat/multimer_dom_body"/>
</dbReference>
<dbReference type="InterPro" id="IPR014729">
    <property type="entry name" value="Rossmann-like_a/b/a_fold"/>
</dbReference>
<dbReference type="NCBIfam" id="TIGR00032">
    <property type="entry name" value="argG"/>
    <property type="match status" value="1"/>
</dbReference>
<dbReference type="NCBIfam" id="NF001770">
    <property type="entry name" value="PRK00509.1"/>
    <property type="match status" value="1"/>
</dbReference>
<dbReference type="PANTHER" id="PTHR11587">
    <property type="entry name" value="ARGININOSUCCINATE SYNTHASE"/>
    <property type="match status" value="1"/>
</dbReference>
<dbReference type="PANTHER" id="PTHR11587:SF2">
    <property type="entry name" value="ARGININOSUCCINATE SYNTHASE"/>
    <property type="match status" value="1"/>
</dbReference>
<dbReference type="Pfam" id="PF20979">
    <property type="entry name" value="Arginosuc_syn_C"/>
    <property type="match status" value="1"/>
</dbReference>
<dbReference type="Pfam" id="PF00764">
    <property type="entry name" value="Arginosuc_synth"/>
    <property type="match status" value="1"/>
</dbReference>
<dbReference type="SUPFAM" id="SSF52402">
    <property type="entry name" value="Adenine nucleotide alpha hydrolases-like"/>
    <property type="match status" value="1"/>
</dbReference>
<dbReference type="SUPFAM" id="SSF69864">
    <property type="entry name" value="Argininosuccinate synthetase, C-terminal domain"/>
    <property type="match status" value="1"/>
</dbReference>
<dbReference type="PROSITE" id="PS00564">
    <property type="entry name" value="ARGININOSUCCIN_SYN_1"/>
    <property type="match status" value="1"/>
</dbReference>
<dbReference type="PROSITE" id="PS00565">
    <property type="entry name" value="ARGININOSUCCIN_SYN_2"/>
    <property type="match status" value="1"/>
</dbReference>